<reference key="1">
    <citation type="journal article" date="1995" name="J. Gen. Virol.">
        <title>The nucleotide sequence and proposed genome organization of oat chlorotic stunt virus, a new soil-borne virus of cereals.</title>
        <authorList>
            <person name="Boonham N."/>
            <person name="Henry C.M."/>
            <person name="Wood K.R."/>
        </authorList>
    </citation>
    <scope>NUCLEOTIDE SEQUENCE [GENOMIC RNA]</scope>
</reference>
<keyword id="KW-1185">Reference proteome</keyword>
<feature type="chain" id="PRO_0000399494" description="Uncharacterized protein p8">
    <location>
        <begin position="1"/>
        <end position="74"/>
    </location>
</feature>
<dbReference type="EMBL" id="X83964">
    <property type="protein sequence ID" value="CAA58799.1"/>
    <property type="molecule type" value="Genomic_RNA"/>
</dbReference>
<dbReference type="KEGG" id="vg:940249"/>
<dbReference type="Proteomes" id="UP000000573">
    <property type="component" value="Segment"/>
</dbReference>
<protein>
    <recommendedName>
        <fullName>Uncharacterized protein p8</fullName>
    </recommendedName>
</protein>
<sequence length="74" mass="8220">MRWLSRTVKCWVPLILAPLHRMSPLSVALATELILGCQLSSLGCLQLPLITRSTNFVGSASLLSRWFLPIIAEE</sequence>
<gene>
    <name type="ORF">ORF3</name>
</gene>
<accession>Q83929</accession>
<organismHost>
    <name type="scientific">Avena sativa</name>
    <name type="common">Oat</name>
    <dbReference type="NCBI Taxonomy" id="4498"/>
</organismHost>
<name>P8_OCSVU</name>
<organism>
    <name type="scientific">Oat chlorotic stunt virus (isolate United Kingdom)</name>
    <name type="common">OCSV</name>
    <dbReference type="NCBI Taxonomy" id="652110"/>
    <lineage>
        <taxon>Viruses</taxon>
        <taxon>Riboviria</taxon>
        <taxon>Orthornavirae</taxon>
        <taxon>Kitrinoviricota</taxon>
        <taxon>Tolucaviricetes</taxon>
        <taxon>Tolivirales</taxon>
        <taxon>Tombusviridae</taxon>
        <taxon>Procedovirinae</taxon>
        <taxon>Avenavirus</taxon>
        <taxon>Avenavirus avenae</taxon>
    </lineage>
</organism>
<proteinExistence type="predicted"/>